<accession>B9DUS1</accession>
<organism>
    <name type="scientific">Streptococcus uberis (strain ATCC BAA-854 / 0140J)</name>
    <dbReference type="NCBI Taxonomy" id="218495"/>
    <lineage>
        <taxon>Bacteria</taxon>
        <taxon>Bacillati</taxon>
        <taxon>Bacillota</taxon>
        <taxon>Bacilli</taxon>
        <taxon>Lactobacillales</taxon>
        <taxon>Streptococcaceae</taxon>
        <taxon>Streptococcus</taxon>
    </lineage>
</organism>
<name>RECR_STRU0</name>
<dbReference type="EMBL" id="AM946015">
    <property type="protein sequence ID" value="CAR42745.1"/>
    <property type="molecule type" value="Genomic_DNA"/>
</dbReference>
<dbReference type="RefSeq" id="WP_012658733.1">
    <property type="nucleotide sequence ID" value="NC_012004.1"/>
</dbReference>
<dbReference type="SMR" id="B9DUS1"/>
<dbReference type="STRING" id="218495.SUB1258"/>
<dbReference type="GeneID" id="93826528"/>
<dbReference type="KEGG" id="sub:SUB1258"/>
<dbReference type="eggNOG" id="COG0353">
    <property type="taxonomic scope" value="Bacteria"/>
</dbReference>
<dbReference type="HOGENOM" id="CLU_060739_1_0_9"/>
<dbReference type="OrthoDB" id="9802672at2"/>
<dbReference type="Proteomes" id="UP000000449">
    <property type="component" value="Chromosome"/>
</dbReference>
<dbReference type="GO" id="GO:0003677">
    <property type="term" value="F:DNA binding"/>
    <property type="evidence" value="ECO:0007669"/>
    <property type="project" value="UniProtKB-UniRule"/>
</dbReference>
<dbReference type="GO" id="GO:0008270">
    <property type="term" value="F:zinc ion binding"/>
    <property type="evidence" value="ECO:0007669"/>
    <property type="project" value="UniProtKB-KW"/>
</dbReference>
<dbReference type="GO" id="GO:0006310">
    <property type="term" value="P:DNA recombination"/>
    <property type="evidence" value="ECO:0007669"/>
    <property type="project" value="UniProtKB-UniRule"/>
</dbReference>
<dbReference type="GO" id="GO:0006281">
    <property type="term" value="P:DNA repair"/>
    <property type="evidence" value="ECO:0007669"/>
    <property type="project" value="UniProtKB-UniRule"/>
</dbReference>
<dbReference type="CDD" id="cd01025">
    <property type="entry name" value="TOPRIM_recR"/>
    <property type="match status" value="1"/>
</dbReference>
<dbReference type="Gene3D" id="3.30.60.80">
    <property type="match status" value="1"/>
</dbReference>
<dbReference type="Gene3D" id="3.40.1360.10">
    <property type="match status" value="1"/>
</dbReference>
<dbReference type="Gene3D" id="6.10.250.240">
    <property type="match status" value="1"/>
</dbReference>
<dbReference type="Gene3D" id="1.10.8.420">
    <property type="entry name" value="RecR Domain 1"/>
    <property type="match status" value="1"/>
</dbReference>
<dbReference type="HAMAP" id="MF_00017">
    <property type="entry name" value="RecR"/>
    <property type="match status" value="1"/>
</dbReference>
<dbReference type="InterPro" id="IPR000093">
    <property type="entry name" value="DNA_Rcmb_RecR"/>
</dbReference>
<dbReference type="InterPro" id="IPR023627">
    <property type="entry name" value="Rcmb_RecR"/>
</dbReference>
<dbReference type="InterPro" id="IPR015967">
    <property type="entry name" value="Rcmb_RecR_Znf"/>
</dbReference>
<dbReference type="InterPro" id="IPR006171">
    <property type="entry name" value="TOPRIM_dom"/>
</dbReference>
<dbReference type="InterPro" id="IPR034137">
    <property type="entry name" value="TOPRIM_RecR"/>
</dbReference>
<dbReference type="NCBIfam" id="TIGR00615">
    <property type="entry name" value="recR"/>
    <property type="match status" value="1"/>
</dbReference>
<dbReference type="PANTHER" id="PTHR30446">
    <property type="entry name" value="RECOMBINATION PROTEIN RECR"/>
    <property type="match status" value="1"/>
</dbReference>
<dbReference type="PANTHER" id="PTHR30446:SF0">
    <property type="entry name" value="RECOMBINATION PROTEIN RECR"/>
    <property type="match status" value="1"/>
</dbReference>
<dbReference type="Pfam" id="PF21175">
    <property type="entry name" value="RecR_C"/>
    <property type="match status" value="1"/>
</dbReference>
<dbReference type="Pfam" id="PF21176">
    <property type="entry name" value="RecR_HhH"/>
    <property type="match status" value="1"/>
</dbReference>
<dbReference type="Pfam" id="PF02132">
    <property type="entry name" value="RecR_ZnF"/>
    <property type="match status" value="1"/>
</dbReference>
<dbReference type="Pfam" id="PF13662">
    <property type="entry name" value="Toprim_4"/>
    <property type="match status" value="1"/>
</dbReference>
<dbReference type="SMART" id="SM00493">
    <property type="entry name" value="TOPRIM"/>
    <property type="match status" value="1"/>
</dbReference>
<dbReference type="SUPFAM" id="SSF111304">
    <property type="entry name" value="Recombination protein RecR"/>
    <property type="match status" value="1"/>
</dbReference>
<dbReference type="PROSITE" id="PS01300">
    <property type="entry name" value="RECR"/>
    <property type="match status" value="1"/>
</dbReference>
<dbReference type="PROSITE" id="PS50880">
    <property type="entry name" value="TOPRIM"/>
    <property type="match status" value="1"/>
</dbReference>
<protein>
    <recommendedName>
        <fullName evidence="1">Recombination protein RecR</fullName>
    </recommendedName>
</protein>
<evidence type="ECO:0000255" key="1">
    <source>
        <dbReference type="HAMAP-Rule" id="MF_00017"/>
    </source>
</evidence>
<sequence>MLYPTPIAKLIDSYSKLPGIGIKTATRLAFYTIGMSDEDVNDFAKNLLAAKRELTYCSVCGNLTDEDPCSICTDPSRDKSMILVVEDSKDVSAMEKIQEYHGYYHVLHGLISPMNGVGPDDINLKTLITRLMDSDVSEVIVATNATADGEATSMYISRVLKPAGIKVTRLARGLAVGSDIEYADEVTLLRAIENRTEL</sequence>
<comment type="function">
    <text evidence="1">May play a role in DNA repair. It seems to be involved in an RecBC-independent recombinational process of DNA repair. It may act with RecF and RecO.</text>
</comment>
<comment type="similarity">
    <text evidence="1">Belongs to the RecR family.</text>
</comment>
<feature type="chain" id="PRO_1000195416" description="Recombination protein RecR">
    <location>
        <begin position="1"/>
        <end position="198"/>
    </location>
</feature>
<feature type="domain" description="Toprim" evidence="1">
    <location>
        <begin position="80"/>
        <end position="175"/>
    </location>
</feature>
<feature type="zinc finger region" description="C4-type" evidence="1">
    <location>
        <begin position="57"/>
        <end position="72"/>
    </location>
</feature>
<reference key="1">
    <citation type="journal article" date="2009" name="BMC Genomics">
        <title>Evidence for niche adaptation in the genome of the bovine pathogen Streptococcus uberis.</title>
        <authorList>
            <person name="Ward P.N."/>
            <person name="Holden M.T.G."/>
            <person name="Leigh J.A."/>
            <person name="Lennard N."/>
            <person name="Bignell A."/>
            <person name="Barron A."/>
            <person name="Clark L."/>
            <person name="Quail M.A."/>
            <person name="Woodward J."/>
            <person name="Barrell B.G."/>
            <person name="Egan S.A."/>
            <person name="Field T.R."/>
            <person name="Maskell D."/>
            <person name="Kehoe M."/>
            <person name="Dowson C.G."/>
            <person name="Chanter N."/>
            <person name="Whatmore A.M."/>
            <person name="Bentley S.D."/>
            <person name="Parkhill J."/>
        </authorList>
    </citation>
    <scope>NUCLEOTIDE SEQUENCE [LARGE SCALE GENOMIC DNA]</scope>
    <source>
        <strain>ATCC BAA-854 / 0140J</strain>
    </source>
</reference>
<keyword id="KW-0227">DNA damage</keyword>
<keyword id="KW-0233">DNA recombination</keyword>
<keyword id="KW-0234">DNA repair</keyword>
<keyword id="KW-0479">Metal-binding</keyword>
<keyword id="KW-1185">Reference proteome</keyword>
<keyword id="KW-0862">Zinc</keyword>
<keyword id="KW-0863">Zinc-finger</keyword>
<proteinExistence type="inferred from homology"/>
<gene>
    <name evidence="1" type="primary">recR</name>
    <name type="ordered locus">SUB1258</name>
</gene>